<name>NTPPA_AKKM8</name>
<proteinExistence type="inferred from homology"/>
<sequence length="189" mass="21027">MIPPVILASQSPRRRELLEKTGIPFSIIVRDTEELKEASMPPQELCLHNAAAKAEAVFREHPDSTVIGADTLVFLEGFPLGKPEDEEEARSMLRKLSGRTHHVCTAVAIRSPLGMKNLAVLTEVTFRELTEKDIRHYMELVDVMDKAGSYAFQEHGEMIISSVRGDTDNVIGLPVRDVMKCLNGLGYRA</sequence>
<gene>
    <name type="ordered locus">Amuc_0586</name>
</gene>
<comment type="function">
    <text evidence="1">Nucleoside triphosphate pyrophosphatase that hydrolyzes dTTP and UTP. May have a dual role in cell division arrest and in preventing the incorporation of modified nucleotides into cellular nucleic acids.</text>
</comment>
<comment type="catalytic activity">
    <reaction evidence="1">
        <text>dTTP + H2O = dTMP + diphosphate + H(+)</text>
        <dbReference type="Rhea" id="RHEA:28534"/>
        <dbReference type="ChEBI" id="CHEBI:15377"/>
        <dbReference type="ChEBI" id="CHEBI:15378"/>
        <dbReference type="ChEBI" id="CHEBI:33019"/>
        <dbReference type="ChEBI" id="CHEBI:37568"/>
        <dbReference type="ChEBI" id="CHEBI:63528"/>
        <dbReference type="EC" id="3.6.1.9"/>
    </reaction>
</comment>
<comment type="catalytic activity">
    <reaction evidence="1">
        <text>UTP + H2O = UMP + diphosphate + H(+)</text>
        <dbReference type="Rhea" id="RHEA:29395"/>
        <dbReference type="ChEBI" id="CHEBI:15377"/>
        <dbReference type="ChEBI" id="CHEBI:15378"/>
        <dbReference type="ChEBI" id="CHEBI:33019"/>
        <dbReference type="ChEBI" id="CHEBI:46398"/>
        <dbReference type="ChEBI" id="CHEBI:57865"/>
        <dbReference type="EC" id="3.6.1.9"/>
    </reaction>
</comment>
<comment type="cofactor">
    <cofactor evidence="1">
        <name>a divalent metal cation</name>
        <dbReference type="ChEBI" id="CHEBI:60240"/>
    </cofactor>
</comment>
<comment type="subcellular location">
    <subcellularLocation>
        <location evidence="1">Cytoplasm</location>
    </subcellularLocation>
</comment>
<comment type="similarity">
    <text evidence="1">Belongs to the Maf family. YhdE subfamily.</text>
</comment>
<organism>
    <name type="scientific">Akkermansia muciniphila (strain ATCC BAA-835 / DSM 22959 / JCM 33894 / BCRC 81048 / CCUG 64013 / CIP 107961 / Muc)</name>
    <dbReference type="NCBI Taxonomy" id="349741"/>
    <lineage>
        <taxon>Bacteria</taxon>
        <taxon>Pseudomonadati</taxon>
        <taxon>Verrucomicrobiota</taxon>
        <taxon>Verrucomicrobiia</taxon>
        <taxon>Verrucomicrobiales</taxon>
        <taxon>Akkermansiaceae</taxon>
        <taxon>Akkermansia</taxon>
    </lineage>
</organism>
<accession>B2UPE6</accession>
<evidence type="ECO:0000255" key="1">
    <source>
        <dbReference type="HAMAP-Rule" id="MF_00528"/>
    </source>
</evidence>
<feature type="chain" id="PRO_1000127767" description="dTTP/UTP pyrophosphatase">
    <location>
        <begin position="1"/>
        <end position="189"/>
    </location>
</feature>
<feature type="active site" description="Proton acceptor" evidence="1">
    <location>
        <position position="70"/>
    </location>
</feature>
<feature type="site" description="Important for substrate specificity" evidence="1">
    <location>
        <position position="13"/>
    </location>
</feature>
<feature type="site" description="Important for substrate specificity" evidence="1">
    <location>
        <position position="71"/>
    </location>
</feature>
<feature type="site" description="Important for substrate specificity" evidence="1">
    <location>
        <position position="153"/>
    </location>
</feature>
<reference key="1">
    <citation type="journal article" date="2011" name="PLoS ONE">
        <title>The genome of Akkermansia muciniphila, a dedicated intestinal mucin degrader, and its use in exploring intestinal metagenomes.</title>
        <authorList>
            <person name="van Passel M.W."/>
            <person name="Kant R."/>
            <person name="Zoetendal E.G."/>
            <person name="Plugge C.M."/>
            <person name="Derrien M."/>
            <person name="Malfatti S.A."/>
            <person name="Chain P.S."/>
            <person name="Woyke T."/>
            <person name="Palva A."/>
            <person name="de Vos W.M."/>
            <person name="Smidt H."/>
        </authorList>
    </citation>
    <scope>NUCLEOTIDE SEQUENCE [LARGE SCALE GENOMIC DNA]</scope>
    <source>
        <strain>ATCC BAA-835 / DSM 22959 / JCM 33894 / BCRC 81048 / CCUG 64013 / CIP 107961 / Muc</strain>
    </source>
</reference>
<dbReference type="EC" id="3.6.1.9" evidence="1"/>
<dbReference type="EMBL" id="CP001071">
    <property type="protein sequence ID" value="ACD04423.1"/>
    <property type="molecule type" value="Genomic_DNA"/>
</dbReference>
<dbReference type="RefSeq" id="WP_012419638.1">
    <property type="nucleotide sequence ID" value="NC_010655.1"/>
</dbReference>
<dbReference type="SMR" id="B2UPE6"/>
<dbReference type="STRING" id="349741.Amuc_0586"/>
<dbReference type="PaxDb" id="349741-Amuc_0586"/>
<dbReference type="KEGG" id="amu:Amuc_0586"/>
<dbReference type="eggNOG" id="COG0424">
    <property type="taxonomic scope" value="Bacteria"/>
</dbReference>
<dbReference type="HOGENOM" id="CLU_040416_2_1_0"/>
<dbReference type="OrthoDB" id="9807767at2"/>
<dbReference type="BioCyc" id="AMUC349741:G1GBX-643-MONOMER"/>
<dbReference type="Proteomes" id="UP000001031">
    <property type="component" value="Chromosome"/>
</dbReference>
<dbReference type="GO" id="GO:0005737">
    <property type="term" value="C:cytoplasm"/>
    <property type="evidence" value="ECO:0007669"/>
    <property type="project" value="UniProtKB-SubCell"/>
</dbReference>
<dbReference type="GO" id="GO:0036218">
    <property type="term" value="F:dTTP diphosphatase activity"/>
    <property type="evidence" value="ECO:0007669"/>
    <property type="project" value="RHEA"/>
</dbReference>
<dbReference type="GO" id="GO:0036221">
    <property type="term" value="F:UTP diphosphatase activity"/>
    <property type="evidence" value="ECO:0007669"/>
    <property type="project" value="RHEA"/>
</dbReference>
<dbReference type="GO" id="GO:0009117">
    <property type="term" value="P:nucleotide metabolic process"/>
    <property type="evidence" value="ECO:0007669"/>
    <property type="project" value="UniProtKB-KW"/>
</dbReference>
<dbReference type="CDD" id="cd00555">
    <property type="entry name" value="Maf"/>
    <property type="match status" value="1"/>
</dbReference>
<dbReference type="Gene3D" id="3.90.950.10">
    <property type="match status" value="1"/>
</dbReference>
<dbReference type="HAMAP" id="MF_00528">
    <property type="entry name" value="Maf"/>
    <property type="match status" value="1"/>
</dbReference>
<dbReference type="InterPro" id="IPR029001">
    <property type="entry name" value="ITPase-like_fam"/>
</dbReference>
<dbReference type="InterPro" id="IPR003697">
    <property type="entry name" value="Maf-like"/>
</dbReference>
<dbReference type="NCBIfam" id="TIGR00172">
    <property type="entry name" value="maf"/>
    <property type="match status" value="1"/>
</dbReference>
<dbReference type="PANTHER" id="PTHR43213">
    <property type="entry name" value="BIFUNCTIONAL DTTP/UTP PYROPHOSPHATASE/METHYLTRANSFERASE PROTEIN-RELATED"/>
    <property type="match status" value="1"/>
</dbReference>
<dbReference type="PANTHER" id="PTHR43213:SF5">
    <property type="entry name" value="BIFUNCTIONAL DTTP_UTP PYROPHOSPHATASE_METHYLTRANSFERASE PROTEIN-RELATED"/>
    <property type="match status" value="1"/>
</dbReference>
<dbReference type="Pfam" id="PF02545">
    <property type="entry name" value="Maf"/>
    <property type="match status" value="1"/>
</dbReference>
<dbReference type="PIRSF" id="PIRSF006305">
    <property type="entry name" value="Maf"/>
    <property type="match status" value="1"/>
</dbReference>
<dbReference type="SUPFAM" id="SSF52972">
    <property type="entry name" value="ITPase-like"/>
    <property type="match status" value="1"/>
</dbReference>
<protein>
    <recommendedName>
        <fullName evidence="1">dTTP/UTP pyrophosphatase</fullName>
        <shortName evidence="1">dTTPase/UTPase</shortName>
        <ecNumber evidence="1">3.6.1.9</ecNumber>
    </recommendedName>
    <alternativeName>
        <fullName evidence="1">Nucleoside triphosphate pyrophosphatase</fullName>
    </alternativeName>
    <alternativeName>
        <fullName evidence="1">Nucleotide pyrophosphatase</fullName>
        <shortName evidence="1">Nucleotide PPase</shortName>
    </alternativeName>
</protein>
<keyword id="KW-0963">Cytoplasm</keyword>
<keyword id="KW-0378">Hydrolase</keyword>
<keyword id="KW-0546">Nucleotide metabolism</keyword>
<keyword id="KW-1185">Reference proteome</keyword>